<comment type="induction">
    <text evidence="1">In stationary phase (at protein level).</text>
</comment>
<dbReference type="EMBL" id="U00096">
    <property type="protein sequence ID" value="ACO59992.1"/>
    <property type="molecule type" value="Genomic_DNA"/>
</dbReference>
<dbReference type="EMBL" id="AP009048">
    <property type="status" value="NOT_ANNOTATED_CDS"/>
    <property type="molecule type" value="Genomic_DNA"/>
</dbReference>
<dbReference type="RefSeq" id="WP_010723099.1">
    <property type="nucleotide sequence ID" value="NZ_SSZK01000012.1"/>
</dbReference>
<dbReference type="RefSeq" id="YP_002791240.1">
    <property type="nucleotide sequence ID" value="NC_000913.3"/>
</dbReference>
<dbReference type="STRING" id="511145.b4674"/>
<dbReference type="PaxDb" id="511145-b4674"/>
<dbReference type="EnsemblBacteria" id="ACO59992">
    <property type="protein sequence ID" value="ACO59992"/>
    <property type="gene ID" value="b4674"/>
</dbReference>
<dbReference type="GeneID" id="7751614"/>
<dbReference type="KEGG" id="eco:b4674"/>
<dbReference type="InParanoid" id="C1P600"/>
<dbReference type="BioCyc" id="EcoCyc:MONOMER0-2873"/>
<dbReference type="PRO" id="PR:C1P600"/>
<dbReference type="Proteomes" id="UP000000625">
    <property type="component" value="Chromosome"/>
</dbReference>
<sequence length="21" mass="2657">MKYINCVYNINYKLKPHSHYK</sequence>
<proteinExistence type="evidence at protein level"/>
<gene>
    <name type="primary">ynbG</name>
    <name type="ordered locus">b4674</name>
    <name type="ordered locus">JW1395.1</name>
</gene>
<organism>
    <name type="scientific">Escherichia coli (strain K12)</name>
    <dbReference type="NCBI Taxonomy" id="83333"/>
    <lineage>
        <taxon>Bacteria</taxon>
        <taxon>Pseudomonadati</taxon>
        <taxon>Pseudomonadota</taxon>
        <taxon>Gammaproteobacteria</taxon>
        <taxon>Enterobacterales</taxon>
        <taxon>Enterobacteriaceae</taxon>
        <taxon>Escherichia</taxon>
    </lineage>
</organism>
<protein>
    <recommendedName>
        <fullName>Uncharacterized protein YnbG</fullName>
    </recommendedName>
</protein>
<feature type="chain" id="PRO_0000381981" description="Uncharacterized protein YnbG">
    <location>
        <begin position="1"/>
        <end position="21"/>
    </location>
</feature>
<keyword id="KW-1185">Reference proteome</keyword>
<accession>C1P600</accession>
<reference key="1">
    <citation type="journal article" date="1997" name="Science">
        <title>The complete genome sequence of Escherichia coli K-12.</title>
        <authorList>
            <person name="Blattner F.R."/>
            <person name="Plunkett G. III"/>
            <person name="Bloch C.A."/>
            <person name="Perna N.T."/>
            <person name="Burland V."/>
            <person name="Riley M."/>
            <person name="Collado-Vides J."/>
            <person name="Glasner J.D."/>
            <person name="Rode C.K."/>
            <person name="Mayhew G.F."/>
            <person name="Gregor J."/>
            <person name="Davis N.W."/>
            <person name="Kirkpatrick H.A."/>
            <person name="Goeden M.A."/>
            <person name="Rose D.J."/>
            <person name="Mau B."/>
            <person name="Shao Y."/>
        </authorList>
    </citation>
    <scope>NUCLEOTIDE SEQUENCE [LARGE SCALE GENOMIC DNA]</scope>
    <source>
        <strain>K12 / MG1655 / ATCC 47076</strain>
    </source>
</reference>
<reference key="2">
    <citation type="journal article" date="2006" name="Mol. Syst. Biol.">
        <title>Highly accurate genome sequences of Escherichia coli K-12 strains MG1655 and W3110.</title>
        <authorList>
            <person name="Hayashi K."/>
            <person name="Morooka N."/>
            <person name="Yamamoto Y."/>
            <person name="Fujita K."/>
            <person name="Isono K."/>
            <person name="Choi S."/>
            <person name="Ohtsubo E."/>
            <person name="Baba T."/>
            <person name="Wanner B.L."/>
            <person name="Mori H."/>
            <person name="Horiuchi T."/>
        </authorList>
    </citation>
    <scope>NUCLEOTIDE SEQUENCE [LARGE SCALE GENOMIC DNA]</scope>
    <source>
        <strain>K12 / W3110 / ATCC 27325 / DSM 5911</strain>
    </source>
</reference>
<reference key="3">
    <citation type="journal article" date="2008" name="Mol. Microbiol.">
        <title>Small membrane proteins found by comparative genomics and ribosome binding site models.</title>
        <authorList>
            <person name="Hemm M.R."/>
            <person name="Paul B.J."/>
            <person name="Schneider T.D."/>
            <person name="Storz G."/>
            <person name="Rudd K.E."/>
        </authorList>
    </citation>
    <scope>IDENTIFICATION</scope>
    <scope>INDUCTION</scope>
    <source>
        <strain>K12 / MG1655 / ATCC 47076</strain>
    </source>
</reference>
<evidence type="ECO:0000269" key="1">
    <source>
    </source>
</evidence>
<name>YNBG_ECOLI</name>